<protein>
    <recommendedName>
        <fullName>Low-affinity iron/zinc ion transport protein fet4</fullName>
    </recommendedName>
</protein>
<evidence type="ECO:0000250" key="1"/>
<evidence type="ECO:0000255" key="2"/>
<evidence type="ECO:0000256" key="3">
    <source>
        <dbReference type="SAM" id="MobiDB-lite"/>
    </source>
</evidence>
<evidence type="ECO:0000269" key="4">
    <source>
    </source>
</evidence>
<evidence type="ECO:0000269" key="5">
    <source>
    </source>
</evidence>
<evidence type="ECO:0000305" key="6"/>
<organism>
    <name type="scientific">Schizosaccharomyces pombe (strain 972 / ATCC 24843)</name>
    <name type="common">Fission yeast</name>
    <dbReference type="NCBI Taxonomy" id="284812"/>
    <lineage>
        <taxon>Eukaryota</taxon>
        <taxon>Fungi</taxon>
        <taxon>Dikarya</taxon>
        <taxon>Ascomycota</taxon>
        <taxon>Taphrinomycotina</taxon>
        <taxon>Schizosaccharomycetes</taxon>
        <taxon>Schizosaccharomycetales</taxon>
        <taxon>Schizosaccharomycetaceae</taxon>
        <taxon>Schizosaccharomyces</taxon>
    </lineage>
</organism>
<feature type="chain" id="PRO_0000358871" description="Low-affinity iron/zinc ion transport protein fet4">
    <location>
        <begin position="1"/>
        <end position="584"/>
    </location>
</feature>
<feature type="topological domain" description="Extracellular" evidence="1">
    <location>
        <begin position="1"/>
        <end position="160"/>
    </location>
</feature>
<feature type="transmembrane region" description="Helical" evidence="2">
    <location>
        <begin position="161"/>
        <end position="181"/>
    </location>
</feature>
<feature type="topological domain" description="Cytoplasmic" evidence="1">
    <location>
        <begin position="182"/>
        <end position="277"/>
    </location>
</feature>
<feature type="transmembrane region" description="Helical" evidence="2">
    <location>
        <begin position="278"/>
        <end position="298"/>
    </location>
</feature>
<feature type="topological domain" description="Extracellular" evidence="1">
    <location>
        <begin position="299"/>
        <end position="310"/>
    </location>
</feature>
<feature type="transmembrane region" description="Helical" evidence="2">
    <location>
        <begin position="311"/>
        <end position="331"/>
    </location>
</feature>
<feature type="topological domain" description="Cytoplasmic" evidence="1">
    <location>
        <begin position="332"/>
        <end position="389"/>
    </location>
</feature>
<feature type="transmembrane region" description="Helical" evidence="2">
    <location>
        <begin position="390"/>
        <end position="410"/>
    </location>
</feature>
<feature type="topological domain" description="Extracellular" evidence="1">
    <location>
        <begin position="411"/>
        <end position="418"/>
    </location>
</feature>
<feature type="transmembrane region" description="Helical" evidence="2">
    <location>
        <begin position="419"/>
        <end position="439"/>
    </location>
</feature>
<feature type="topological domain" description="Cytoplasmic" evidence="1">
    <location>
        <begin position="440"/>
        <end position="493"/>
    </location>
</feature>
<feature type="transmembrane region" description="Helical" evidence="2">
    <location>
        <begin position="494"/>
        <end position="514"/>
    </location>
</feature>
<feature type="topological domain" description="Extracellular" evidence="1">
    <location>
        <begin position="515"/>
        <end position="526"/>
    </location>
</feature>
<feature type="transmembrane region" description="Helical" evidence="2">
    <location>
        <begin position="527"/>
        <end position="547"/>
    </location>
</feature>
<feature type="topological domain" description="Cytoplasmic" evidence="1">
    <location>
        <begin position="548"/>
        <end position="584"/>
    </location>
</feature>
<feature type="region of interest" description="Disordered" evidence="3">
    <location>
        <begin position="1"/>
        <end position="28"/>
    </location>
</feature>
<feature type="glycosylation site" description="N-linked (GlcNAc...) asparagine" evidence="2">
    <location>
        <position position="522"/>
    </location>
</feature>
<reference key="1">
    <citation type="journal article" date="2002" name="Nature">
        <title>The genome sequence of Schizosaccharomyces pombe.</title>
        <authorList>
            <person name="Wood V."/>
            <person name="Gwilliam R."/>
            <person name="Rajandream M.A."/>
            <person name="Lyne M.H."/>
            <person name="Lyne R."/>
            <person name="Stewart A."/>
            <person name="Sgouros J.G."/>
            <person name="Peat N."/>
            <person name="Hayles J."/>
            <person name="Baker S.G."/>
            <person name="Basham D."/>
            <person name="Bowman S."/>
            <person name="Brooks K."/>
            <person name="Brown D."/>
            <person name="Brown S."/>
            <person name="Chillingworth T."/>
            <person name="Churcher C.M."/>
            <person name="Collins M."/>
            <person name="Connor R."/>
            <person name="Cronin A."/>
            <person name="Davis P."/>
            <person name="Feltwell T."/>
            <person name="Fraser A."/>
            <person name="Gentles S."/>
            <person name="Goble A."/>
            <person name="Hamlin N."/>
            <person name="Harris D.E."/>
            <person name="Hidalgo J."/>
            <person name="Hodgson G."/>
            <person name="Holroyd S."/>
            <person name="Hornsby T."/>
            <person name="Howarth S."/>
            <person name="Huckle E.J."/>
            <person name="Hunt S."/>
            <person name="Jagels K."/>
            <person name="James K.D."/>
            <person name="Jones L."/>
            <person name="Jones M."/>
            <person name="Leather S."/>
            <person name="McDonald S."/>
            <person name="McLean J."/>
            <person name="Mooney P."/>
            <person name="Moule S."/>
            <person name="Mungall K.L."/>
            <person name="Murphy L.D."/>
            <person name="Niblett D."/>
            <person name="Odell C."/>
            <person name="Oliver K."/>
            <person name="O'Neil S."/>
            <person name="Pearson D."/>
            <person name="Quail M.A."/>
            <person name="Rabbinowitsch E."/>
            <person name="Rutherford K.M."/>
            <person name="Rutter S."/>
            <person name="Saunders D."/>
            <person name="Seeger K."/>
            <person name="Sharp S."/>
            <person name="Skelton J."/>
            <person name="Simmonds M.N."/>
            <person name="Squares R."/>
            <person name="Squares S."/>
            <person name="Stevens K."/>
            <person name="Taylor K."/>
            <person name="Taylor R.G."/>
            <person name="Tivey A."/>
            <person name="Walsh S.V."/>
            <person name="Warren T."/>
            <person name="Whitehead S."/>
            <person name="Woodward J.R."/>
            <person name="Volckaert G."/>
            <person name="Aert R."/>
            <person name="Robben J."/>
            <person name="Grymonprez B."/>
            <person name="Weltjens I."/>
            <person name="Vanstreels E."/>
            <person name="Rieger M."/>
            <person name="Schaefer M."/>
            <person name="Mueller-Auer S."/>
            <person name="Gabel C."/>
            <person name="Fuchs M."/>
            <person name="Duesterhoeft A."/>
            <person name="Fritzc C."/>
            <person name="Holzer E."/>
            <person name="Moestl D."/>
            <person name="Hilbert H."/>
            <person name="Borzym K."/>
            <person name="Langer I."/>
            <person name="Beck A."/>
            <person name="Lehrach H."/>
            <person name="Reinhardt R."/>
            <person name="Pohl T.M."/>
            <person name="Eger P."/>
            <person name="Zimmermann W."/>
            <person name="Wedler H."/>
            <person name="Wambutt R."/>
            <person name="Purnelle B."/>
            <person name="Goffeau A."/>
            <person name="Cadieu E."/>
            <person name="Dreano S."/>
            <person name="Gloux S."/>
            <person name="Lelaure V."/>
            <person name="Mottier S."/>
            <person name="Galibert F."/>
            <person name="Aves S.J."/>
            <person name="Xiang Z."/>
            <person name="Hunt C."/>
            <person name="Moore K."/>
            <person name="Hurst S.M."/>
            <person name="Lucas M."/>
            <person name="Rochet M."/>
            <person name="Gaillardin C."/>
            <person name="Tallada V.A."/>
            <person name="Garzon A."/>
            <person name="Thode G."/>
            <person name="Daga R.R."/>
            <person name="Cruzado L."/>
            <person name="Jimenez J."/>
            <person name="Sanchez M."/>
            <person name="del Rey F."/>
            <person name="Benito J."/>
            <person name="Dominguez A."/>
            <person name="Revuelta J.L."/>
            <person name="Moreno S."/>
            <person name="Armstrong J."/>
            <person name="Forsburg S.L."/>
            <person name="Cerutti L."/>
            <person name="Lowe T."/>
            <person name="McCombie W.R."/>
            <person name="Paulsen I."/>
            <person name="Potashkin J."/>
            <person name="Shpakovski G.V."/>
            <person name="Ussery D."/>
            <person name="Barrell B.G."/>
            <person name="Nurse P."/>
        </authorList>
    </citation>
    <scope>NUCLEOTIDE SEQUENCE [LARGE SCALE GENOMIC DNA]</scope>
    <source>
        <strain>972 / ATCC 24843</strain>
    </source>
</reference>
<reference key="2">
    <citation type="journal article" date="2006" name="Nat. Biotechnol.">
        <title>ORFeome cloning and global analysis of protein localization in the fission yeast Schizosaccharomyces pombe.</title>
        <authorList>
            <person name="Matsuyama A."/>
            <person name="Arai R."/>
            <person name="Yashiroda Y."/>
            <person name="Shirai A."/>
            <person name="Kamata A."/>
            <person name="Sekido S."/>
            <person name="Kobayashi Y."/>
            <person name="Hashimoto A."/>
            <person name="Hamamoto M."/>
            <person name="Hiraoka Y."/>
            <person name="Horinouchi S."/>
            <person name="Yoshida M."/>
        </authorList>
    </citation>
    <scope>SUBCELLULAR LOCATION [LARGE SCALE ANALYSIS]</scope>
</reference>
<reference key="3">
    <citation type="journal article" date="2008" name="Eukaryot. Cell">
        <title>Response of Schizosaccharomyces pombe to zinc deficiency.</title>
        <authorList>
            <person name="Dainty S.J."/>
            <person name="Kennedy C.A."/>
            <person name="Watt S."/>
            <person name="Baehler J."/>
            <person name="Whitehall S.K."/>
        </authorList>
    </citation>
    <scope>FUNCTION</scope>
    <scope>INDUCTION</scope>
</reference>
<name>FET4_SCHPO</name>
<sequence>MTASITEIDSISEESNVESVSHLQHSPSFEKKGADFSISLNEKKDFASPITEEIPSPDGIATPEPETKKKLSFGARVWDLICSPGRQHDVCVAAPTQLVRSCDDYANSASTLVTNDDGTKTKVDSDEKKHKHKNVRDYIRFKHVDIGGRIFDLITRLAGTSFTFILMLIILIVWAIVGGIYRAPDNWQIVMQDGSSIQCYVSDTLLMRQQQNQHIQVLTMISQLRSRLLTTSRLLGPVLNDKTKISSVNVALMKDDVGDAEKLPTENWFDFICNYVSFMVGSIIFLVVYWIGIFIWIGFGRMLGWSDEWQLYINTAVAVELTFTSVFLQNVRHRHMKYIDRCVTSIFRIDSVIEEELRRMMGDKEPNEEITIKMDKINLGERSIDYYADLIGSGVGVVVSTCVFVAWIAIGNVMHWDSNWWLIIGTYTGLVGFLDGFVLRNVYFRESSKEATEIQTLIDEDYALYQKLDLPLPHEHITNYKSTFGGSLSQWIGWLCALPISVLFSVFVILGLIIAAGSLRFNETAQLFCNTPTMIIEGALLIVLIEAHNIANLKRRIQFRQIHLRRLTILKMLAGDNYSTTSTV</sequence>
<accession>Q9HFE1</accession>
<dbReference type="EMBL" id="CU329671">
    <property type="protein sequence ID" value="CAC08238.1"/>
    <property type="molecule type" value="Genomic_DNA"/>
</dbReference>
<dbReference type="RefSeq" id="NP_595134.1">
    <property type="nucleotide sequence ID" value="NM_001021042.2"/>
</dbReference>
<dbReference type="BioGRID" id="277814">
    <property type="interactions" value="1"/>
</dbReference>
<dbReference type="FunCoup" id="Q9HFE1">
    <property type="interactions" value="3"/>
</dbReference>
<dbReference type="STRING" id="284812.Q9HFE1"/>
<dbReference type="TCDB" id="9.A.9.1.2">
    <property type="family name" value="the low affinity fe(2+) transporter (fet) family"/>
</dbReference>
<dbReference type="GlyCosmos" id="Q9HFE1">
    <property type="glycosylation" value="1 site, No reported glycans"/>
</dbReference>
<dbReference type="iPTMnet" id="Q9HFE1"/>
<dbReference type="PaxDb" id="4896-SPBP26C9.03c.1"/>
<dbReference type="EnsemblFungi" id="SPBP26C9.03c.1">
    <property type="protein sequence ID" value="SPBP26C9.03c.1:pep"/>
    <property type="gene ID" value="SPBP26C9.03c"/>
</dbReference>
<dbReference type="GeneID" id="2541302"/>
<dbReference type="KEGG" id="spo:2541302"/>
<dbReference type="PomBase" id="SPBP26C9.03c">
    <property type="gene designation" value="fet4"/>
</dbReference>
<dbReference type="VEuPathDB" id="FungiDB:SPBP26C9.03c"/>
<dbReference type="eggNOG" id="ENOG502QRCK">
    <property type="taxonomic scope" value="Eukaryota"/>
</dbReference>
<dbReference type="HOGENOM" id="CLU_028340_0_0_1"/>
<dbReference type="InParanoid" id="Q9HFE1"/>
<dbReference type="OMA" id="WQVVMQD"/>
<dbReference type="PhylomeDB" id="Q9HFE1"/>
<dbReference type="PRO" id="PR:Q9HFE1"/>
<dbReference type="Proteomes" id="UP000002485">
    <property type="component" value="Chromosome II"/>
</dbReference>
<dbReference type="GO" id="GO:0032153">
    <property type="term" value="C:cell division site"/>
    <property type="evidence" value="ECO:0007005"/>
    <property type="project" value="PomBase"/>
</dbReference>
<dbReference type="GO" id="GO:0051286">
    <property type="term" value="C:cell tip"/>
    <property type="evidence" value="ECO:0007005"/>
    <property type="project" value="PomBase"/>
</dbReference>
<dbReference type="GO" id="GO:0005794">
    <property type="term" value="C:Golgi apparatus"/>
    <property type="evidence" value="ECO:0007005"/>
    <property type="project" value="PomBase"/>
</dbReference>
<dbReference type="GO" id="GO:0000139">
    <property type="term" value="C:Golgi membrane"/>
    <property type="evidence" value="ECO:0007669"/>
    <property type="project" value="UniProtKB-SubCell"/>
</dbReference>
<dbReference type="GO" id="GO:0005886">
    <property type="term" value="C:plasma membrane"/>
    <property type="evidence" value="ECO:0000266"/>
    <property type="project" value="PomBase"/>
</dbReference>
<dbReference type="GO" id="GO:0005381">
    <property type="term" value="F:iron ion transmembrane transporter activity"/>
    <property type="evidence" value="ECO:0000266"/>
    <property type="project" value="PomBase"/>
</dbReference>
<dbReference type="GO" id="GO:0071578">
    <property type="term" value="P:zinc ion import across plasma membrane"/>
    <property type="evidence" value="ECO:0000266"/>
    <property type="project" value="PomBase"/>
</dbReference>
<dbReference type="InterPro" id="IPR007251">
    <property type="entry name" value="Iron_permease_Fet4"/>
</dbReference>
<dbReference type="Pfam" id="PF04120">
    <property type="entry name" value="Iron_permease"/>
    <property type="match status" value="4"/>
</dbReference>
<comment type="function">
    <text evidence="1 5">Required for Fe(2+) ion low affinity uptake (By similarity). Has a role in zinc uptake under conditions of zinc limitation.</text>
</comment>
<comment type="subcellular location">
    <subcellularLocation>
        <location evidence="4">Golgi apparatus membrane</location>
        <topology evidence="4">Multi-pass membrane protein</topology>
    </subcellularLocation>
    <subcellularLocation>
        <location evidence="4">Cell membrane</location>
        <topology evidence="4">Multi-pass membrane protein</topology>
    </subcellularLocation>
    <text>Localizes to the cell tip and barrier septum.</text>
</comment>
<comment type="induction">
    <text evidence="5">By zinc deficiency.</text>
</comment>
<comment type="similarity">
    <text evidence="6">Belongs to the FET4 family.</text>
</comment>
<keyword id="KW-1003">Cell membrane</keyword>
<keyword id="KW-0325">Glycoprotein</keyword>
<keyword id="KW-0333">Golgi apparatus</keyword>
<keyword id="KW-0406">Ion transport</keyword>
<keyword id="KW-0408">Iron</keyword>
<keyword id="KW-0410">Iron transport</keyword>
<keyword id="KW-0472">Membrane</keyword>
<keyword id="KW-1185">Reference proteome</keyword>
<keyword id="KW-0812">Transmembrane</keyword>
<keyword id="KW-1133">Transmembrane helix</keyword>
<keyword id="KW-0813">Transport</keyword>
<keyword id="KW-0862">Zinc</keyword>
<keyword id="KW-0864">Zinc transport</keyword>
<gene>
    <name type="primary">fet4</name>
    <name type="ORF">SPBP26C9.03c</name>
</gene>
<proteinExistence type="evidence at transcript level"/>